<dbReference type="EC" id="2.1.2.11" evidence="1"/>
<dbReference type="EMBL" id="BX571857">
    <property type="protein sequence ID" value="CAG44300.1"/>
    <property type="molecule type" value="Genomic_DNA"/>
</dbReference>
<dbReference type="RefSeq" id="WP_000860047.1">
    <property type="nucleotide sequence ID" value="NC_002953.3"/>
</dbReference>
<dbReference type="SMR" id="Q6G677"/>
<dbReference type="KEGG" id="sas:SAS2484"/>
<dbReference type="HOGENOM" id="CLU_036645_1_0_9"/>
<dbReference type="UniPathway" id="UPA00028">
    <property type="reaction ID" value="UER00003"/>
</dbReference>
<dbReference type="GO" id="GO:0005737">
    <property type="term" value="C:cytoplasm"/>
    <property type="evidence" value="ECO:0007669"/>
    <property type="project" value="UniProtKB-SubCell"/>
</dbReference>
<dbReference type="GO" id="GO:0003864">
    <property type="term" value="F:3-methyl-2-oxobutanoate hydroxymethyltransferase activity"/>
    <property type="evidence" value="ECO:0007669"/>
    <property type="project" value="UniProtKB-UniRule"/>
</dbReference>
<dbReference type="GO" id="GO:0000287">
    <property type="term" value="F:magnesium ion binding"/>
    <property type="evidence" value="ECO:0007669"/>
    <property type="project" value="TreeGrafter"/>
</dbReference>
<dbReference type="GO" id="GO:0015940">
    <property type="term" value="P:pantothenate biosynthetic process"/>
    <property type="evidence" value="ECO:0007669"/>
    <property type="project" value="UniProtKB-UniRule"/>
</dbReference>
<dbReference type="CDD" id="cd06557">
    <property type="entry name" value="KPHMT-like"/>
    <property type="match status" value="1"/>
</dbReference>
<dbReference type="FunFam" id="3.20.20.60:FF:000030">
    <property type="entry name" value="3-methyl-2-oxobutanoate hydroxymethyltransferase"/>
    <property type="match status" value="1"/>
</dbReference>
<dbReference type="Gene3D" id="3.20.20.60">
    <property type="entry name" value="Phosphoenolpyruvate-binding domains"/>
    <property type="match status" value="1"/>
</dbReference>
<dbReference type="HAMAP" id="MF_00156">
    <property type="entry name" value="PanB"/>
    <property type="match status" value="1"/>
</dbReference>
<dbReference type="InterPro" id="IPR003700">
    <property type="entry name" value="Pantoate_hydroxy_MeTrfase"/>
</dbReference>
<dbReference type="InterPro" id="IPR015813">
    <property type="entry name" value="Pyrv/PenolPyrv_kinase-like_dom"/>
</dbReference>
<dbReference type="InterPro" id="IPR040442">
    <property type="entry name" value="Pyrv_kinase-like_dom_sf"/>
</dbReference>
<dbReference type="NCBIfam" id="TIGR00222">
    <property type="entry name" value="panB"/>
    <property type="match status" value="1"/>
</dbReference>
<dbReference type="NCBIfam" id="NF001452">
    <property type="entry name" value="PRK00311.1"/>
    <property type="match status" value="1"/>
</dbReference>
<dbReference type="PANTHER" id="PTHR20881">
    <property type="entry name" value="3-METHYL-2-OXOBUTANOATE HYDROXYMETHYLTRANSFERASE"/>
    <property type="match status" value="1"/>
</dbReference>
<dbReference type="PANTHER" id="PTHR20881:SF0">
    <property type="entry name" value="3-METHYL-2-OXOBUTANOATE HYDROXYMETHYLTRANSFERASE"/>
    <property type="match status" value="1"/>
</dbReference>
<dbReference type="Pfam" id="PF02548">
    <property type="entry name" value="Pantoate_transf"/>
    <property type="match status" value="1"/>
</dbReference>
<dbReference type="PIRSF" id="PIRSF000388">
    <property type="entry name" value="Pantoate_hydroxy_MeTrfase"/>
    <property type="match status" value="1"/>
</dbReference>
<dbReference type="SUPFAM" id="SSF51621">
    <property type="entry name" value="Phosphoenolpyruvate/pyruvate domain"/>
    <property type="match status" value="1"/>
</dbReference>
<reference key="1">
    <citation type="journal article" date="2004" name="Proc. Natl. Acad. Sci. U.S.A.">
        <title>Complete genomes of two clinical Staphylococcus aureus strains: evidence for the rapid evolution of virulence and drug resistance.</title>
        <authorList>
            <person name="Holden M.T.G."/>
            <person name="Feil E.J."/>
            <person name="Lindsay J.A."/>
            <person name="Peacock S.J."/>
            <person name="Day N.P.J."/>
            <person name="Enright M.C."/>
            <person name="Foster T.J."/>
            <person name="Moore C.E."/>
            <person name="Hurst L."/>
            <person name="Atkin R."/>
            <person name="Barron A."/>
            <person name="Bason N."/>
            <person name="Bentley S.D."/>
            <person name="Chillingworth C."/>
            <person name="Chillingworth T."/>
            <person name="Churcher C."/>
            <person name="Clark L."/>
            <person name="Corton C."/>
            <person name="Cronin A."/>
            <person name="Doggett J."/>
            <person name="Dowd L."/>
            <person name="Feltwell T."/>
            <person name="Hance Z."/>
            <person name="Harris B."/>
            <person name="Hauser H."/>
            <person name="Holroyd S."/>
            <person name="Jagels K."/>
            <person name="James K.D."/>
            <person name="Lennard N."/>
            <person name="Line A."/>
            <person name="Mayes R."/>
            <person name="Moule S."/>
            <person name="Mungall K."/>
            <person name="Ormond D."/>
            <person name="Quail M.A."/>
            <person name="Rabbinowitsch E."/>
            <person name="Rutherford K.M."/>
            <person name="Sanders M."/>
            <person name="Sharp S."/>
            <person name="Simmonds M."/>
            <person name="Stevens K."/>
            <person name="Whitehead S."/>
            <person name="Barrell B.G."/>
            <person name="Spratt B.G."/>
            <person name="Parkhill J."/>
        </authorList>
    </citation>
    <scope>NUCLEOTIDE SEQUENCE [LARGE SCALE GENOMIC DNA]</scope>
    <source>
        <strain>MSSA476</strain>
    </source>
</reference>
<comment type="function">
    <text evidence="1">Catalyzes the reversible reaction in which hydroxymethyl group from 5,10-methylenetetrahydrofolate is transferred onto alpha-ketoisovalerate to form ketopantoate.</text>
</comment>
<comment type="catalytic activity">
    <reaction evidence="1">
        <text>3-methyl-2-oxobutanoate + (6R)-5,10-methylene-5,6,7,8-tetrahydrofolate + H2O = 2-dehydropantoate + (6S)-5,6,7,8-tetrahydrofolate</text>
        <dbReference type="Rhea" id="RHEA:11824"/>
        <dbReference type="ChEBI" id="CHEBI:11561"/>
        <dbReference type="ChEBI" id="CHEBI:11851"/>
        <dbReference type="ChEBI" id="CHEBI:15377"/>
        <dbReference type="ChEBI" id="CHEBI:15636"/>
        <dbReference type="ChEBI" id="CHEBI:57453"/>
        <dbReference type="EC" id="2.1.2.11"/>
    </reaction>
</comment>
<comment type="cofactor">
    <cofactor evidence="1">
        <name>Mg(2+)</name>
        <dbReference type="ChEBI" id="CHEBI:18420"/>
    </cofactor>
    <text evidence="1">Binds 1 Mg(2+) ion per subunit.</text>
</comment>
<comment type="pathway">
    <text evidence="1">Cofactor biosynthesis; (R)-pantothenate biosynthesis; (R)-pantoate from 3-methyl-2-oxobutanoate: step 1/2.</text>
</comment>
<comment type="subunit">
    <text evidence="1">Homodecamer; pentamer of dimers.</text>
</comment>
<comment type="subcellular location">
    <subcellularLocation>
        <location evidence="1">Cytoplasm</location>
    </subcellularLocation>
</comment>
<comment type="similarity">
    <text evidence="1">Belongs to the PanB family.</text>
</comment>
<protein>
    <recommendedName>
        <fullName evidence="1">3-methyl-2-oxobutanoate hydroxymethyltransferase</fullName>
        <ecNumber evidence="1">2.1.2.11</ecNumber>
    </recommendedName>
    <alternativeName>
        <fullName evidence="1">Ketopantoate hydroxymethyltransferase</fullName>
        <shortName evidence="1">KPHMT</shortName>
    </alternativeName>
</protein>
<gene>
    <name evidence="1" type="primary">panB</name>
    <name type="ordered locus">SAS2484</name>
</gene>
<evidence type="ECO:0000255" key="1">
    <source>
        <dbReference type="HAMAP-Rule" id="MF_00156"/>
    </source>
</evidence>
<keyword id="KW-0963">Cytoplasm</keyword>
<keyword id="KW-0460">Magnesium</keyword>
<keyword id="KW-0479">Metal-binding</keyword>
<keyword id="KW-0566">Pantothenate biosynthesis</keyword>
<keyword id="KW-0808">Transferase</keyword>
<organism>
    <name type="scientific">Staphylococcus aureus (strain MSSA476)</name>
    <dbReference type="NCBI Taxonomy" id="282459"/>
    <lineage>
        <taxon>Bacteria</taxon>
        <taxon>Bacillati</taxon>
        <taxon>Bacillota</taxon>
        <taxon>Bacilli</taxon>
        <taxon>Bacillales</taxon>
        <taxon>Staphylococcaceae</taxon>
        <taxon>Staphylococcus</taxon>
    </lineage>
</organism>
<feature type="chain" id="PRO_0000184892" description="3-methyl-2-oxobutanoate hydroxymethyltransferase">
    <location>
        <begin position="1"/>
        <end position="272"/>
    </location>
</feature>
<feature type="active site" description="Proton acceptor" evidence="1">
    <location>
        <position position="179"/>
    </location>
</feature>
<feature type="binding site" evidence="1">
    <location>
        <begin position="43"/>
        <end position="44"/>
    </location>
    <ligand>
        <name>3-methyl-2-oxobutanoate</name>
        <dbReference type="ChEBI" id="CHEBI:11851"/>
    </ligand>
</feature>
<feature type="binding site" evidence="1">
    <location>
        <position position="43"/>
    </location>
    <ligand>
        <name>Mg(2+)</name>
        <dbReference type="ChEBI" id="CHEBI:18420"/>
    </ligand>
</feature>
<feature type="binding site" evidence="1">
    <location>
        <position position="82"/>
    </location>
    <ligand>
        <name>3-methyl-2-oxobutanoate</name>
        <dbReference type="ChEBI" id="CHEBI:11851"/>
    </ligand>
</feature>
<feature type="binding site" evidence="1">
    <location>
        <position position="82"/>
    </location>
    <ligand>
        <name>Mg(2+)</name>
        <dbReference type="ChEBI" id="CHEBI:18420"/>
    </ligand>
</feature>
<feature type="binding site" evidence="1">
    <location>
        <position position="112"/>
    </location>
    <ligand>
        <name>3-methyl-2-oxobutanoate</name>
        <dbReference type="ChEBI" id="CHEBI:11851"/>
    </ligand>
</feature>
<feature type="binding site" evidence="1">
    <location>
        <position position="114"/>
    </location>
    <ligand>
        <name>Mg(2+)</name>
        <dbReference type="ChEBI" id="CHEBI:18420"/>
    </ligand>
</feature>
<name>PANB_STAAS</name>
<accession>Q6G677</accession>
<sequence length="272" mass="29256">MKTVSQLIDMKQKQTKISMVTAYDFPSAKQVEAAGIDMILVGDSLGMTVLGYESTVQVTLADMIHHGRAVRRGAPNTFVVVDMPIGAVGISMTQDLNHALKLYQETNANAIKAEGAHITPFIEKATAIGIPVVAHLGLTPQSVGVMGYKLQGATKEAAEQLILDAKNVEQAGAVALVLEAIPNDLAEEISKHLTIPVIGIGAGKGTDGQVLVYHDMLNYGVEHKAKFVKQFADFSVGVDGLKQYDQEVKSGAFPSEEYTYKKKIMNEVNNND</sequence>
<proteinExistence type="inferred from homology"/>